<feature type="signal peptide" evidence="2">
    <location>
        <begin position="1"/>
        <end position="8"/>
    </location>
</feature>
<feature type="chain" id="PRO_0000391680" description="Curli assembly protein CsgC">
    <location>
        <begin position="9"/>
        <end position="108"/>
    </location>
</feature>
<name>CSGC_SALAR</name>
<comment type="function">
    <text evidence="1">Plays a role in the extracellular assembly of CsgA into thin aggregative fimbriae (Tafi) fibers. Assembly may also require CsgE. Tafi are thought to be assembled via an extracellular nucleation-precipitation (ENP) pathway, and possibly also via an intracellular non-CsgC-dependent pathway (By similarity).</text>
</comment>
<comment type="subcellular location">
    <subcellularLocation>
        <location evidence="1">Periplasm</location>
    </subcellularLocation>
</comment>
<comment type="similarity">
    <text evidence="3">Belongs to the CsgC/AgfC family.</text>
</comment>
<comment type="sequence caution" evidence="3">
    <conflict type="erroneous initiation">
        <sequence resource="EMBL-CDS" id="ABX21738"/>
    </conflict>
</comment>
<proteinExistence type="inferred from homology"/>
<gene>
    <name type="ordered locus">SARI_01853</name>
</gene>
<sequence length="108" mass="11880">MHTLLLLAALSNQITFITTQQGDIYTVIPQVILSEPCVCQVQILSVRNGTWGQSHTQQKQTLSLPANQPIELSRLSVNISSEDSVKIILTVSNGQSLHLSQQWPSSAR</sequence>
<organism>
    <name type="scientific">Salmonella arizonae (strain ATCC BAA-731 / CDC346-86 / RSK2980)</name>
    <dbReference type="NCBI Taxonomy" id="41514"/>
    <lineage>
        <taxon>Bacteria</taxon>
        <taxon>Pseudomonadati</taxon>
        <taxon>Pseudomonadota</taxon>
        <taxon>Gammaproteobacteria</taxon>
        <taxon>Enterobacterales</taxon>
        <taxon>Enterobacteriaceae</taxon>
        <taxon>Salmonella</taxon>
    </lineage>
</organism>
<evidence type="ECO:0000250" key="1"/>
<evidence type="ECO:0000255" key="2"/>
<evidence type="ECO:0000305" key="3"/>
<keyword id="KW-0143">Chaperone</keyword>
<keyword id="KW-0574">Periplasm</keyword>
<keyword id="KW-1185">Reference proteome</keyword>
<keyword id="KW-0732">Signal</keyword>
<dbReference type="EMBL" id="CP000880">
    <property type="protein sequence ID" value="ABX21738.1"/>
    <property type="status" value="ALT_INIT"/>
    <property type="molecule type" value="Genomic_DNA"/>
</dbReference>
<dbReference type="SMR" id="A9MH19"/>
<dbReference type="STRING" id="41514.SARI_01853"/>
<dbReference type="KEGG" id="ses:SARI_01853"/>
<dbReference type="HOGENOM" id="CLU_152585_0_0_6"/>
<dbReference type="Proteomes" id="UP000002084">
    <property type="component" value="Chromosome"/>
</dbReference>
<dbReference type="GO" id="GO:0042597">
    <property type="term" value="C:periplasmic space"/>
    <property type="evidence" value="ECO:0007669"/>
    <property type="project" value="UniProtKB-SubCell"/>
</dbReference>
<dbReference type="Gene3D" id="2.60.40.2420">
    <property type="match status" value="1"/>
</dbReference>
<dbReference type="InterPro" id="IPR053722">
    <property type="entry name" value="Curli_assembly_CsgC/AgfC"/>
</dbReference>
<dbReference type="InterPro" id="IPR014491">
    <property type="entry name" value="Curli_production_prot_CsgC"/>
</dbReference>
<dbReference type="NCBIfam" id="NF007507">
    <property type="entry name" value="PRK10102.1"/>
    <property type="match status" value="1"/>
</dbReference>
<dbReference type="Pfam" id="PF10610">
    <property type="entry name" value="Tafi-CsgC"/>
    <property type="match status" value="1"/>
</dbReference>
<dbReference type="PIRSF" id="PIRSF018100">
    <property type="entry name" value="CsgC"/>
    <property type="match status" value="1"/>
</dbReference>
<reference key="1">
    <citation type="submission" date="2007-11" db="EMBL/GenBank/DDBJ databases">
        <authorList>
            <consortium name="The Salmonella enterica serovar Arizonae Genome Sequencing Project"/>
            <person name="McClelland M."/>
            <person name="Sanderson E.K."/>
            <person name="Porwollik S."/>
            <person name="Spieth J."/>
            <person name="Clifton W.S."/>
            <person name="Fulton R."/>
            <person name="Chunyan W."/>
            <person name="Wollam A."/>
            <person name="Shah N."/>
            <person name="Pepin K."/>
            <person name="Bhonagiri V."/>
            <person name="Nash W."/>
            <person name="Johnson M."/>
            <person name="Thiruvilangam P."/>
            <person name="Wilson R."/>
        </authorList>
    </citation>
    <scope>NUCLEOTIDE SEQUENCE [LARGE SCALE GENOMIC DNA]</scope>
    <source>
        <strain>ATCC BAA-731 / CDC346-86 / RSK2980</strain>
    </source>
</reference>
<accession>A9MH19</accession>
<protein>
    <recommendedName>
        <fullName>Curli assembly protein CsgC</fullName>
    </recommendedName>
</protein>